<feature type="chain" id="PRO_1000164602" description="Alanine racemase">
    <location>
        <begin position="1"/>
        <end position="368"/>
    </location>
</feature>
<feature type="active site" description="Proton acceptor; specific for D-alanine" evidence="1">
    <location>
        <position position="40"/>
    </location>
</feature>
<feature type="active site" description="Proton acceptor; specific for L-alanine" evidence="1">
    <location>
        <position position="263"/>
    </location>
</feature>
<feature type="binding site" evidence="1">
    <location>
        <position position="134"/>
    </location>
    <ligand>
        <name>substrate</name>
    </ligand>
</feature>
<feature type="binding site" evidence="1">
    <location>
        <position position="310"/>
    </location>
    <ligand>
        <name>substrate</name>
    </ligand>
</feature>
<feature type="modified residue" description="N6-(pyridoxal phosphate)lysine" evidence="1">
    <location>
        <position position="40"/>
    </location>
</feature>
<proteinExistence type="inferred from homology"/>
<evidence type="ECO:0000255" key="1">
    <source>
        <dbReference type="HAMAP-Rule" id="MF_01201"/>
    </source>
</evidence>
<name>ALR_LISMH</name>
<dbReference type="EC" id="5.1.1.1" evidence="1"/>
<dbReference type="EMBL" id="CP001175">
    <property type="protein sequence ID" value="ACK40081.1"/>
    <property type="molecule type" value="Genomic_DNA"/>
</dbReference>
<dbReference type="RefSeq" id="WP_012581662.1">
    <property type="nucleotide sequence ID" value="NC_011660.1"/>
</dbReference>
<dbReference type="SMR" id="B8DG73"/>
<dbReference type="KEGG" id="lmh:LMHCC_1740"/>
<dbReference type="HOGENOM" id="CLU_028393_2_1_9"/>
<dbReference type="UniPathway" id="UPA00042">
    <property type="reaction ID" value="UER00497"/>
</dbReference>
<dbReference type="GO" id="GO:0005829">
    <property type="term" value="C:cytosol"/>
    <property type="evidence" value="ECO:0007669"/>
    <property type="project" value="TreeGrafter"/>
</dbReference>
<dbReference type="GO" id="GO:0008784">
    <property type="term" value="F:alanine racemase activity"/>
    <property type="evidence" value="ECO:0007669"/>
    <property type="project" value="UniProtKB-UniRule"/>
</dbReference>
<dbReference type="GO" id="GO:0030170">
    <property type="term" value="F:pyridoxal phosphate binding"/>
    <property type="evidence" value="ECO:0007669"/>
    <property type="project" value="UniProtKB-UniRule"/>
</dbReference>
<dbReference type="GO" id="GO:0030632">
    <property type="term" value="P:D-alanine biosynthetic process"/>
    <property type="evidence" value="ECO:0007669"/>
    <property type="project" value="UniProtKB-UniRule"/>
</dbReference>
<dbReference type="GO" id="GO:0009252">
    <property type="term" value="P:peptidoglycan biosynthetic process"/>
    <property type="evidence" value="ECO:0007669"/>
    <property type="project" value="TreeGrafter"/>
</dbReference>
<dbReference type="CDD" id="cd00430">
    <property type="entry name" value="PLPDE_III_AR"/>
    <property type="match status" value="1"/>
</dbReference>
<dbReference type="FunFam" id="2.40.37.10:FF:000006">
    <property type="entry name" value="Alanine racemase"/>
    <property type="match status" value="1"/>
</dbReference>
<dbReference type="FunFam" id="3.20.20.10:FF:000002">
    <property type="entry name" value="Alanine racemase"/>
    <property type="match status" value="1"/>
</dbReference>
<dbReference type="Gene3D" id="3.20.20.10">
    <property type="entry name" value="Alanine racemase"/>
    <property type="match status" value="1"/>
</dbReference>
<dbReference type="Gene3D" id="2.40.37.10">
    <property type="entry name" value="Lyase, Ornithine Decarboxylase, Chain A, domain 1"/>
    <property type="match status" value="1"/>
</dbReference>
<dbReference type="HAMAP" id="MF_01201">
    <property type="entry name" value="Ala_racemase"/>
    <property type="match status" value="1"/>
</dbReference>
<dbReference type="InterPro" id="IPR000821">
    <property type="entry name" value="Ala_racemase"/>
</dbReference>
<dbReference type="InterPro" id="IPR009006">
    <property type="entry name" value="Ala_racemase/Decarboxylase_C"/>
</dbReference>
<dbReference type="InterPro" id="IPR011079">
    <property type="entry name" value="Ala_racemase_C"/>
</dbReference>
<dbReference type="InterPro" id="IPR001608">
    <property type="entry name" value="Ala_racemase_N"/>
</dbReference>
<dbReference type="InterPro" id="IPR020622">
    <property type="entry name" value="Ala_racemase_pyridoxalP-BS"/>
</dbReference>
<dbReference type="InterPro" id="IPR029066">
    <property type="entry name" value="PLP-binding_barrel"/>
</dbReference>
<dbReference type="NCBIfam" id="TIGR00492">
    <property type="entry name" value="alr"/>
    <property type="match status" value="1"/>
</dbReference>
<dbReference type="PANTHER" id="PTHR30511">
    <property type="entry name" value="ALANINE RACEMASE"/>
    <property type="match status" value="1"/>
</dbReference>
<dbReference type="PANTHER" id="PTHR30511:SF0">
    <property type="entry name" value="ALANINE RACEMASE, CATABOLIC-RELATED"/>
    <property type="match status" value="1"/>
</dbReference>
<dbReference type="Pfam" id="PF00842">
    <property type="entry name" value="Ala_racemase_C"/>
    <property type="match status" value="1"/>
</dbReference>
<dbReference type="Pfam" id="PF01168">
    <property type="entry name" value="Ala_racemase_N"/>
    <property type="match status" value="1"/>
</dbReference>
<dbReference type="PRINTS" id="PR00992">
    <property type="entry name" value="ALARACEMASE"/>
</dbReference>
<dbReference type="SMART" id="SM01005">
    <property type="entry name" value="Ala_racemase_C"/>
    <property type="match status" value="1"/>
</dbReference>
<dbReference type="SUPFAM" id="SSF50621">
    <property type="entry name" value="Alanine racemase C-terminal domain-like"/>
    <property type="match status" value="1"/>
</dbReference>
<dbReference type="SUPFAM" id="SSF51419">
    <property type="entry name" value="PLP-binding barrel"/>
    <property type="match status" value="1"/>
</dbReference>
<dbReference type="PROSITE" id="PS00395">
    <property type="entry name" value="ALANINE_RACEMASE"/>
    <property type="match status" value="1"/>
</dbReference>
<comment type="function">
    <text evidence="1">Catalyzes the interconversion of L-alanine and D-alanine. May also act on other amino acids.</text>
</comment>
<comment type="catalytic activity">
    <reaction evidence="1">
        <text>L-alanine = D-alanine</text>
        <dbReference type="Rhea" id="RHEA:20249"/>
        <dbReference type="ChEBI" id="CHEBI:57416"/>
        <dbReference type="ChEBI" id="CHEBI:57972"/>
        <dbReference type="EC" id="5.1.1.1"/>
    </reaction>
</comment>
<comment type="cofactor">
    <cofactor evidence="1">
        <name>pyridoxal 5'-phosphate</name>
        <dbReference type="ChEBI" id="CHEBI:597326"/>
    </cofactor>
</comment>
<comment type="pathway">
    <text evidence="1">Amino-acid biosynthesis; D-alanine biosynthesis; D-alanine from L-alanine: step 1/1.</text>
</comment>
<comment type="similarity">
    <text evidence="1">Belongs to the alanine racemase family.</text>
</comment>
<organism>
    <name type="scientific">Listeria monocytogenes serotype 4a (strain HCC23)</name>
    <dbReference type="NCBI Taxonomy" id="552536"/>
    <lineage>
        <taxon>Bacteria</taxon>
        <taxon>Bacillati</taxon>
        <taxon>Bacillota</taxon>
        <taxon>Bacilli</taxon>
        <taxon>Bacillales</taxon>
        <taxon>Listeriaceae</taxon>
        <taxon>Listeria</taxon>
    </lineage>
</organism>
<reference key="1">
    <citation type="journal article" date="2011" name="J. Bacteriol.">
        <title>Genome sequence of lineage III Listeria monocytogenes strain HCC23.</title>
        <authorList>
            <person name="Steele C.L."/>
            <person name="Donaldson J.R."/>
            <person name="Paul D."/>
            <person name="Banes M.M."/>
            <person name="Arick T."/>
            <person name="Bridges S.M."/>
            <person name="Lawrence M.L."/>
        </authorList>
    </citation>
    <scope>NUCLEOTIDE SEQUENCE [LARGE SCALE GENOMIC DNA]</scope>
    <source>
        <strain>HCC23</strain>
    </source>
</reference>
<gene>
    <name type="primary">alr</name>
    <name type="ordered locus">LMHCC_1740</name>
</gene>
<sequence length="368" mass="40905">MVTGWHRPTWIEIDRAAIRENIKNEQNKLPENVDLWAVVKANAYGHGIIEVARTAKEAGAKGFCVAILDEALALREAGFQDDFILVLGATRKEDANLAAKNHISLTVFREDWLEDLTLEAPLRIHLKVDSGMGRLGIRTVEEARQIETTIASDNQLQLEGIYTHFATADQLETSYFEQQLAKFQTILTSLKNRPTYVHTANSAASLLQPQIGFDAIRFGISMYGLTPSTEIKTSLPFELKPALALYTEMVHVKELAPGDSVSYGATYTATEREWVATLPIGYADGLIRHYSGFHVLVGGELAPIIGRVCMDQTIIKLPREFQTGSKVTIIGEDNGNAITADDAAQYLDTINYEVTCLLNERIPRKYLH</sequence>
<accession>B8DG73</accession>
<protein>
    <recommendedName>
        <fullName evidence="1">Alanine racemase</fullName>
        <ecNumber evidence="1">5.1.1.1</ecNumber>
    </recommendedName>
</protein>
<keyword id="KW-0413">Isomerase</keyword>
<keyword id="KW-0663">Pyridoxal phosphate</keyword>